<organism>
    <name type="scientific">Brucella melitensis biotype 1 (strain ATCC 23456 / CCUG 17765 / NCTC 10094 / 16M)</name>
    <dbReference type="NCBI Taxonomy" id="224914"/>
    <lineage>
        <taxon>Bacteria</taxon>
        <taxon>Pseudomonadati</taxon>
        <taxon>Pseudomonadota</taxon>
        <taxon>Alphaproteobacteria</taxon>
        <taxon>Hyphomicrobiales</taxon>
        <taxon>Brucellaceae</taxon>
        <taxon>Brucella/Ochrobactrum group</taxon>
        <taxon>Brucella</taxon>
    </lineage>
</organism>
<dbReference type="EMBL" id="AE008917">
    <property type="protein sequence ID" value="AAL51825.1"/>
    <property type="molecule type" value="Genomic_DNA"/>
</dbReference>
<dbReference type="PIR" id="AF3332">
    <property type="entry name" value="AF3332"/>
</dbReference>
<dbReference type="SMR" id="Q8YI01"/>
<dbReference type="KEGG" id="bme:BMEI0644"/>
<dbReference type="KEGG" id="bmel:DK63_783"/>
<dbReference type="PATRIC" id="fig|224914.52.peg.820"/>
<dbReference type="eggNOG" id="COG0378">
    <property type="taxonomic scope" value="Bacteria"/>
</dbReference>
<dbReference type="PhylomeDB" id="Q8YI01"/>
<dbReference type="Proteomes" id="UP000000419">
    <property type="component" value="Chromosome I"/>
</dbReference>
<dbReference type="GO" id="GO:0005737">
    <property type="term" value="C:cytoplasm"/>
    <property type="evidence" value="ECO:0007669"/>
    <property type="project" value="UniProtKB-SubCell"/>
</dbReference>
<dbReference type="GO" id="GO:0005525">
    <property type="term" value="F:GTP binding"/>
    <property type="evidence" value="ECO:0007669"/>
    <property type="project" value="UniProtKB-KW"/>
</dbReference>
<dbReference type="GO" id="GO:0003924">
    <property type="term" value="F:GTPase activity"/>
    <property type="evidence" value="ECO:0007669"/>
    <property type="project" value="InterPro"/>
</dbReference>
<dbReference type="GO" id="GO:0016151">
    <property type="term" value="F:nickel cation binding"/>
    <property type="evidence" value="ECO:0007669"/>
    <property type="project" value="UniProtKB-UniRule"/>
</dbReference>
<dbReference type="GO" id="GO:0043419">
    <property type="term" value="P:urea catabolic process"/>
    <property type="evidence" value="ECO:0007669"/>
    <property type="project" value="InterPro"/>
</dbReference>
<dbReference type="CDD" id="cd05540">
    <property type="entry name" value="UreG"/>
    <property type="match status" value="1"/>
</dbReference>
<dbReference type="Gene3D" id="3.40.50.300">
    <property type="entry name" value="P-loop containing nucleotide triphosphate hydrolases"/>
    <property type="match status" value="1"/>
</dbReference>
<dbReference type="HAMAP" id="MF_01389">
    <property type="entry name" value="UreG"/>
    <property type="match status" value="1"/>
</dbReference>
<dbReference type="InterPro" id="IPR003495">
    <property type="entry name" value="CobW/HypB/UreG_nucleotide-bd"/>
</dbReference>
<dbReference type="InterPro" id="IPR027417">
    <property type="entry name" value="P-loop_NTPase"/>
</dbReference>
<dbReference type="InterPro" id="IPR004400">
    <property type="entry name" value="UreG"/>
</dbReference>
<dbReference type="NCBIfam" id="TIGR00101">
    <property type="entry name" value="ureG"/>
    <property type="match status" value="1"/>
</dbReference>
<dbReference type="PANTHER" id="PTHR31715">
    <property type="entry name" value="UREASE ACCESSORY PROTEIN G"/>
    <property type="match status" value="1"/>
</dbReference>
<dbReference type="PANTHER" id="PTHR31715:SF0">
    <property type="entry name" value="UREASE ACCESSORY PROTEIN G"/>
    <property type="match status" value="1"/>
</dbReference>
<dbReference type="Pfam" id="PF02492">
    <property type="entry name" value="cobW"/>
    <property type="match status" value="1"/>
</dbReference>
<dbReference type="PIRSF" id="PIRSF005624">
    <property type="entry name" value="Ni-bind_GTPase"/>
    <property type="match status" value="1"/>
</dbReference>
<dbReference type="SUPFAM" id="SSF52540">
    <property type="entry name" value="P-loop containing nucleoside triphosphate hydrolases"/>
    <property type="match status" value="1"/>
</dbReference>
<comment type="function">
    <text evidence="1">Facilitates the functional incorporation of the urease nickel metallocenter. This process requires GTP hydrolysis, probably effectuated by UreG.</text>
</comment>
<comment type="subunit">
    <text evidence="1">Homodimer. UreD, UreF and UreG form a complex that acts as a GTP-hydrolysis-dependent molecular chaperone, activating the urease apoprotein by helping to assemble the nickel containing metallocenter of UreC. The UreE protein probably delivers the nickel.</text>
</comment>
<comment type="subcellular location">
    <subcellularLocation>
        <location evidence="1">Cytoplasm</location>
    </subcellularLocation>
</comment>
<comment type="similarity">
    <text evidence="1">Belongs to the SIMIBI class G3E GTPase family. UreG subfamily.</text>
</comment>
<protein>
    <recommendedName>
        <fullName evidence="1">Urease accessory protein UreG 2</fullName>
    </recommendedName>
</protein>
<accession>Q8YI01</accession>
<sequence length="212" mass="22977">MKKIPRIGVGGPVGSGKTAIIEAVVPILIKLGYRILVITNDIVTTEDAKHVQRTLKGVLIEDRIVGVETGGCPHTAVREDPSMNLAAVEEMEAKFPDTDLVLLESGGDNLTLTFSPALIDFFIYVIDVAAGDKIPRKNGPGISQSDILVINKTDLAPYVGASLQVMDDDSRMMRGKKPFVFTNCKTNEGIDDLVHLIRENVLFDTEVSKESA</sequence>
<reference key="1">
    <citation type="journal article" date="2002" name="Proc. Natl. Acad. Sci. U.S.A.">
        <title>The genome sequence of the facultative intracellular pathogen Brucella melitensis.</title>
        <authorList>
            <person name="DelVecchio V.G."/>
            <person name="Kapatral V."/>
            <person name="Redkar R.J."/>
            <person name="Patra G."/>
            <person name="Mujer C."/>
            <person name="Los T."/>
            <person name="Ivanova N."/>
            <person name="Anderson I."/>
            <person name="Bhattacharyya A."/>
            <person name="Lykidis A."/>
            <person name="Reznik G."/>
            <person name="Jablonski L."/>
            <person name="Larsen N."/>
            <person name="D'Souza M."/>
            <person name="Bernal A."/>
            <person name="Mazur M."/>
            <person name="Goltsman E."/>
            <person name="Selkov E."/>
            <person name="Elzer P.H."/>
            <person name="Hagius S."/>
            <person name="O'Callaghan D."/>
            <person name="Letesson J.-J."/>
            <person name="Haselkorn R."/>
            <person name="Kyrpides N.C."/>
            <person name="Overbeek R."/>
        </authorList>
    </citation>
    <scope>NUCLEOTIDE SEQUENCE [LARGE SCALE GENOMIC DNA]</scope>
    <source>
        <strain>ATCC 23456 / CCUG 17765 / NCTC 10094 / 16M</strain>
    </source>
</reference>
<gene>
    <name evidence="1" type="primary">ureG2</name>
    <name type="ordered locus">BMEI0644</name>
</gene>
<feature type="chain" id="PRO_0000347359" description="Urease accessory protein UreG 2">
    <location>
        <begin position="1"/>
        <end position="212"/>
    </location>
</feature>
<feature type="binding site" evidence="1">
    <location>
        <begin position="11"/>
        <end position="18"/>
    </location>
    <ligand>
        <name>GTP</name>
        <dbReference type="ChEBI" id="CHEBI:37565"/>
    </ligand>
</feature>
<proteinExistence type="inferred from homology"/>
<evidence type="ECO:0000255" key="1">
    <source>
        <dbReference type="HAMAP-Rule" id="MF_01389"/>
    </source>
</evidence>
<name>UREG2_BRUME</name>
<keyword id="KW-0143">Chaperone</keyword>
<keyword id="KW-0963">Cytoplasm</keyword>
<keyword id="KW-0342">GTP-binding</keyword>
<keyword id="KW-0996">Nickel insertion</keyword>
<keyword id="KW-0547">Nucleotide-binding</keyword>